<reference key="1">
    <citation type="journal article" date="1999" name="Curr. Microbiol.">
        <title>Expression of a new cold shock protein of 21.5 kDa and of the major cold shock protein by Streptococcus thermophilus after cold shock.</title>
        <authorList>
            <person name="Perrin C."/>
            <person name="Guimont C."/>
            <person name="Bracquart P."/>
            <person name="Gaillard J.-L."/>
        </authorList>
    </citation>
    <scope>PROTEIN SEQUENCE</scope>
    <source>
        <strain>PB18</strain>
    </source>
</reference>
<feature type="chain" id="PRO_0000079387" description="21 kDa cold shock-induced protein">
    <location>
        <begin position="1"/>
        <end position="20" status="greater than"/>
    </location>
</feature>
<feature type="region of interest" description="Disordered" evidence="1">
    <location>
        <begin position="1"/>
        <end position="20"/>
    </location>
</feature>
<feature type="compositionally biased region" description="Basic and acidic residues" evidence="1">
    <location>
        <begin position="1"/>
        <end position="12"/>
    </location>
</feature>
<feature type="non-terminal residue">
    <location>
        <position position="20"/>
    </location>
</feature>
<protein>
    <recommendedName>
        <fullName>21 kDa cold shock-induced protein</fullName>
    </recommendedName>
</protein>
<keyword id="KW-0903">Direct protein sequencing</keyword>
<keyword id="KW-0346">Stress response</keyword>
<accession>P81621</accession>
<sequence length="20" mass="2390">TDSIKETIKETVNHQAEWPY</sequence>
<name>CS21_STRTR</name>
<evidence type="ECO:0000256" key="1">
    <source>
        <dbReference type="SAM" id="MobiDB-lite"/>
    </source>
</evidence>
<comment type="induction">
    <text>By cold shock.</text>
</comment>
<dbReference type="eggNOG" id="COG0783">
    <property type="taxonomic scope" value="Bacteria"/>
</dbReference>
<proteinExistence type="evidence at protein level"/>
<organism>
    <name type="scientific">Streptococcus thermophilus</name>
    <dbReference type="NCBI Taxonomy" id="1308"/>
    <lineage>
        <taxon>Bacteria</taxon>
        <taxon>Bacillati</taxon>
        <taxon>Bacillota</taxon>
        <taxon>Bacilli</taxon>
        <taxon>Lactobacillales</taxon>
        <taxon>Streptococcaceae</taxon>
        <taxon>Streptococcus</taxon>
    </lineage>
</organism>